<comment type="function">
    <text evidence="1">Histone chaperone that facilitates histone deposition and histone exchange and removal during nucleosome assembly and disassembly.</text>
</comment>
<comment type="subunit">
    <text evidence="1">Interacts with histone H3 and histone H4.</text>
</comment>
<comment type="subcellular location">
    <subcellularLocation>
        <location evidence="1">Nucleus</location>
    </subcellularLocation>
</comment>
<comment type="similarity">
    <text evidence="3">Belongs to the ASF1 family.</text>
</comment>
<feature type="chain" id="PRO_0000284031" description="Histone chaperone ASF1">
    <location>
        <begin position="1"/>
        <end position="276"/>
    </location>
</feature>
<feature type="region of interest" description="Disordered" evidence="2">
    <location>
        <begin position="159"/>
        <end position="276"/>
    </location>
</feature>
<feature type="compositionally biased region" description="Low complexity" evidence="2">
    <location>
        <begin position="162"/>
        <end position="176"/>
    </location>
</feature>
<feature type="compositionally biased region" description="Basic residues" evidence="2">
    <location>
        <begin position="181"/>
        <end position="191"/>
    </location>
</feature>
<feature type="compositionally biased region" description="Basic and acidic residues" evidence="2">
    <location>
        <begin position="192"/>
        <end position="203"/>
    </location>
</feature>
<feature type="compositionally biased region" description="Acidic residues" evidence="2">
    <location>
        <begin position="208"/>
        <end position="260"/>
    </location>
</feature>
<feature type="compositionally biased region" description="Basic and acidic residues" evidence="2">
    <location>
        <begin position="261"/>
        <end position="276"/>
    </location>
</feature>
<sequence>MSVVSLLGVNVINNPAKFTDKYEFEITFECLEPLQKDLEWKLTYVGSAQSDNYDQELDSLLVGPIPVGINKFVFEADPPDTKRIPIDELLGVTVILLTCAYDGREFVRVGYYVNNEYESDELRDEPPAKPDVEKIRRNVLANKPRVTRFAIKWLLPAPNSHPSSPRLTSSLTRTSTAPKSLPKRRRPRQSRAHGEESADKDAQMEGVEGPDGEGENVAEDDELSDDGSVDIEGESEDELLEEYEVVDQEGGEAAEGDEMEVDKPEPTVHKQEAMVH</sequence>
<proteinExistence type="inferred from homology"/>
<protein>
    <recommendedName>
        <fullName>Histone chaperone ASF1</fullName>
    </recommendedName>
    <alternativeName>
        <fullName>Anti-silencing function protein 1</fullName>
    </alternativeName>
</protein>
<name>ASF1_CHAGB</name>
<dbReference type="EMBL" id="CH408035">
    <property type="protein sequence ID" value="EAQ83278.1"/>
    <property type="molecule type" value="Genomic_DNA"/>
</dbReference>
<dbReference type="RefSeq" id="XP_001227609.1">
    <property type="nucleotide sequence ID" value="XM_001227608.1"/>
</dbReference>
<dbReference type="SMR" id="Q2GQS2"/>
<dbReference type="FunCoup" id="Q2GQS2">
    <property type="interactions" value="709"/>
</dbReference>
<dbReference type="STRING" id="306901.Q2GQS2"/>
<dbReference type="GeneID" id="4396440"/>
<dbReference type="VEuPathDB" id="FungiDB:CHGG_09682"/>
<dbReference type="eggNOG" id="KOG3265">
    <property type="taxonomic scope" value="Eukaryota"/>
</dbReference>
<dbReference type="HOGENOM" id="CLU_060354_0_2_1"/>
<dbReference type="InParanoid" id="Q2GQS2"/>
<dbReference type="OMA" id="AADEMNM"/>
<dbReference type="OrthoDB" id="29755at2759"/>
<dbReference type="Proteomes" id="UP000001056">
    <property type="component" value="Unassembled WGS sequence"/>
</dbReference>
<dbReference type="GO" id="GO:0000781">
    <property type="term" value="C:chromosome, telomeric region"/>
    <property type="evidence" value="ECO:0007669"/>
    <property type="project" value="GOC"/>
</dbReference>
<dbReference type="GO" id="GO:0005829">
    <property type="term" value="C:cytosol"/>
    <property type="evidence" value="ECO:0007669"/>
    <property type="project" value="EnsemblFungi"/>
</dbReference>
<dbReference type="GO" id="GO:0070775">
    <property type="term" value="C:H3 histone acetyltransferase complex"/>
    <property type="evidence" value="ECO:0007669"/>
    <property type="project" value="EnsemblFungi"/>
</dbReference>
<dbReference type="GO" id="GO:0005634">
    <property type="term" value="C:nucleus"/>
    <property type="evidence" value="ECO:0007669"/>
    <property type="project" value="UniProtKB-SubCell"/>
</dbReference>
<dbReference type="GO" id="GO:0010698">
    <property type="term" value="F:acetyltransferase activator activity"/>
    <property type="evidence" value="ECO:0007669"/>
    <property type="project" value="EnsemblFungi"/>
</dbReference>
<dbReference type="GO" id="GO:0042393">
    <property type="term" value="F:histone binding"/>
    <property type="evidence" value="ECO:0007669"/>
    <property type="project" value="EnsemblFungi"/>
</dbReference>
<dbReference type="GO" id="GO:0033554">
    <property type="term" value="P:cellular response to stress"/>
    <property type="evidence" value="ECO:0007669"/>
    <property type="project" value="EnsemblFungi"/>
</dbReference>
<dbReference type="GO" id="GO:0006335">
    <property type="term" value="P:DNA replication-dependent chromatin assembly"/>
    <property type="evidence" value="ECO:0007669"/>
    <property type="project" value="EnsemblFungi"/>
</dbReference>
<dbReference type="GO" id="GO:0006334">
    <property type="term" value="P:nucleosome assembly"/>
    <property type="evidence" value="ECO:0007669"/>
    <property type="project" value="InterPro"/>
</dbReference>
<dbReference type="GO" id="GO:0006337">
    <property type="term" value="P:nucleosome disassembly"/>
    <property type="evidence" value="ECO:0007669"/>
    <property type="project" value="EnsemblFungi"/>
</dbReference>
<dbReference type="GO" id="GO:0032968">
    <property type="term" value="P:positive regulation of transcription elongation by RNA polymerase II"/>
    <property type="evidence" value="ECO:0007669"/>
    <property type="project" value="EnsemblFungi"/>
</dbReference>
<dbReference type="GO" id="GO:0036211">
    <property type="term" value="P:protein modification process"/>
    <property type="evidence" value="ECO:0007669"/>
    <property type="project" value="EnsemblFungi"/>
</dbReference>
<dbReference type="GO" id="GO:0030466">
    <property type="term" value="P:silent mating-type cassette heterochromatin formation"/>
    <property type="evidence" value="ECO:0007669"/>
    <property type="project" value="EnsemblFungi"/>
</dbReference>
<dbReference type="GO" id="GO:0031509">
    <property type="term" value="P:subtelomeric heterochromatin formation"/>
    <property type="evidence" value="ECO:0007669"/>
    <property type="project" value="EnsemblFungi"/>
</dbReference>
<dbReference type="FunFam" id="2.60.40.1490:FF:000001">
    <property type="entry name" value="Histone chaperone ASF1"/>
    <property type="match status" value="1"/>
</dbReference>
<dbReference type="Gene3D" id="2.60.40.1490">
    <property type="entry name" value="Histone chaperone ASF1-like"/>
    <property type="match status" value="1"/>
</dbReference>
<dbReference type="InterPro" id="IPR006818">
    <property type="entry name" value="ASF1-like"/>
</dbReference>
<dbReference type="InterPro" id="IPR036747">
    <property type="entry name" value="ASF1-like_sf"/>
</dbReference>
<dbReference type="InterPro" id="IPR017282">
    <property type="entry name" value="Hist_deposition_Asf1"/>
</dbReference>
<dbReference type="PANTHER" id="PTHR12040">
    <property type="entry name" value="ANTI-SILENCING PROTEIN 1"/>
    <property type="match status" value="1"/>
</dbReference>
<dbReference type="PANTHER" id="PTHR12040:SF0">
    <property type="entry name" value="HISTONE CHAPERONE ASF1"/>
    <property type="match status" value="1"/>
</dbReference>
<dbReference type="Pfam" id="PF04729">
    <property type="entry name" value="ASF1_hist_chap"/>
    <property type="match status" value="1"/>
</dbReference>
<dbReference type="PIRSF" id="PIRSF037759">
    <property type="entry name" value="Histone_Asf1"/>
    <property type="match status" value="1"/>
</dbReference>
<dbReference type="SUPFAM" id="SSF101546">
    <property type="entry name" value="ASF1-like"/>
    <property type="match status" value="1"/>
</dbReference>
<keyword id="KW-0143">Chaperone</keyword>
<keyword id="KW-0156">Chromatin regulator</keyword>
<keyword id="KW-0539">Nucleus</keyword>
<keyword id="KW-1185">Reference proteome</keyword>
<keyword id="KW-0804">Transcription</keyword>
<keyword id="KW-0805">Transcription regulation</keyword>
<organism>
    <name type="scientific">Chaetomium globosum (strain ATCC 6205 / CBS 148.51 / DSM 1962 / NBRC 6347 / NRRL 1970)</name>
    <name type="common">Soil fungus</name>
    <dbReference type="NCBI Taxonomy" id="306901"/>
    <lineage>
        <taxon>Eukaryota</taxon>
        <taxon>Fungi</taxon>
        <taxon>Dikarya</taxon>
        <taxon>Ascomycota</taxon>
        <taxon>Pezizomycotina</taxon>
        <taxon>Sordariomycetes</taxon>
        <taxon>Sordariomycetidae</taxon>
        <taxon>Sordariales</taxon>
        <taxon>Chaetomiaceae</taxon>
        <taxon>Chaetomium</taxon>
    </lineage>
</organism>
<gene>
    <name type="primary">ASF1</name>
    <name type="ORF">CHGG_09682</name>
</gene>
<accession>Q2GQS2</accession>
<reference key="1">
    <citation type="journal article" date="2015" name="Genome Announc.">
        <title>Draft genome sequence of the cellulolytic fungus Chaetomium globosum.</title>
        <authorList>
            <person name="Cuomo C.A."/>
            <person name="Untereiner W.A."/>
            <person name="Ma L.-J."/>
            <person name="Grabherr M."/>
            <person name="Birren B.W."/>
        </authorList>
    </citation>
    <scope>NUCLEOTIDE SEQUENCE [LARGE SCALE GENOMIC DNA]</scope>
    <source>
        <strain>ATCC 6205 / CBS 148.51 / DSM 1962 / NBRC 6347 / NRRL 1970</strain>
    </source>
</reference>
<evidence type="ECO:0000250" key="1"/>
<evidence type="ECO:0000256" key="2">
    <source>
        <dbReference type="SAM" id="MobiDB-lite"/>
    </source>
</evidence>
<evidence type="ECO:0000305" key="3"/>